<protein>
    <recommendedName>
        <fullName evidence="1">Endoribonuclease YbeY</fullName>
        <ecNumber evidence="1">3.1.-.-</ecNumber>
    </recommendedName>
</protein>
<reference key="1">
    <citation type="submission" date="2007-11" db="EMBL/GenBank/DDBJ databases">
        <title>Genome sequencing of phylogenetically and phenotypically diverse Coxiella burnetii isolates.</title>
        <authorList>
            <person name="Seshadri R."/>
            <person name="Samuel J.E."/>
        </authorList>
    </citation>
    <scope>NUCLEOTIDE SEQUENCE [LARGE SCALE GENOMIC DNA]</scope>
    <source>
        <strain>RSA 331 / Henzerling II</strain>
    </source>
</reference>
<organism>
    <name type="scientific">Coxiella burnetii (strain RSA 331 / Henzerling II)</name>
    <dbReference type="NCBI Taxonomy" id="360115"/>
    <lineage>
        <taxon>Bacteria</taxon>
        <taxon>Pseudomonadati</taxon>
        <taxon>Pseudomonadota</taxon>
        <taxon>Gammaproteobacteria</taxon>
        <taxon>Legionellales</taxon>
        <taxon>Coxiellaceae</taxon>
        <taxon>Coxiella</taxon>
    </lineage>
</organism>
<comment type="function">
    <text evidence="1">Single strand-specific metallo-endoribonuclease involved in late-stage 70S ribosome quality control and in maturation of the 3' terminus of the 16S rRNA.</text>
</comment>
<comment type="cofactor">
    <cofactor evidence="1">
        <name>Zn(2+)</name>
        <dbReference type="ChEBI" id="CHEBI:29105"/>
    </cofactor>
    <text evidence="1">Binds 1 zinc ion.</text>
</comment>
<comment type="subcellular location">
    <subcellularLocation>
        <location evidence="1">Cytoplasm</location>
    </subcellularLocation>
</comment>
<comment type="similarity">
    <text evidence="1">Belongs to the endoribonuclease YbeY family.</text>
</comment>
<gene>
    <name evidence="1" type="primary">ybeY</name>
    <name type="ordered locus">COXBURSA331_A0681</name>
</gene>
<feature type="chain" id="PRO_1000073902" description="Endoribonuclease YbeY">
    <location>
        <begin position="1"/>
        <end position="152"/>
    </location>
</feature>
<feature type="binding site" evidence="1">
    <location>
        <position position="114"/>
    </location>
    <ligand>
        <name>Zn(2+)</name>
        <dbReference type="ChEBI" id="CHEBI:29105"/>
        <note>catalytic</note>
    </ligand>
</feature>
<feature type="binding site" evidence="1">
    <location>
        <position position="118"/>
    </location>
    <ligand>
        <name>Zn(2+)</name>
        <dbReference type="ChEBI" id="CHEBI:29105"/>
        <note>catalytic</note>
    </ligand>
</feature>
<feature type="binding site" evidence="1">
    <location>
        <position position="124"/>
    </location>
    <ligand>
        <name>Zn(2+)</name>
        <dbReference type="ChEBI" id="CHEBI:29105"/>
        <note>catalytic</note>
    </ligand>
</feature>
<sequence length="152" mass="17296">MISIDVQHATQFEDLPSLSNIEQWVETALQFIVTDKNKSALTIRFIDKEESTELNEHYRHKKGPTNVLSFPDEPIPGFPSESFGDLAICAPLVAEEAHAQHKTTEAHFAHLITHGFLHLLGYDHVENEDAEEMENLEIKILSQLGFENPYEE</sequence>
<proteinExistence type="inferred from homology"/>
<accession>A9NC56</accession>
<dbReference type="EC" id="3.1.-.-" evidence="1"/>
<dbReference type="EMBL" id="CP000890">
    <property type="protein sequence ID" value="ABX78070.1"/>
    <property type="molecule type" value="Genomic_DNA"/>
</dbReference>
<dbReference type="RefSeq" id="WP_005771102.1">
    <property type="nucleotide sequence ID" value="NC_010117.1"/>
</dbReference>
<dbReference type="SMR" id="A9NC56"/>
<dbReference type="KEGG" id="cbs:COXBURSA331_A0681"/>
<dbReference type="HOGENOM" id="CLU_106710_0_1_6"/>
<dbReference type="GO" id="GO:0005737">
    <property type="term" value="C:cytoplasm"/>
    <property type="evidence" value="ECO:0007669"/>
    <property type="project" value="UniProtKB-SubCell"/>
</dbReference>
<dbReference type="GO" id="GO:0004222">
    <property type="term" value="F:metalloendopeptidase activity"/>
    <property type="evidence" value="ECO:0007669"/>
    <property type="project" value="InterPro"/>
</dbReference>
<dbReference type="GO" id="GO:0004521">
    <property type="term" value="F:RNA endonuclease activity"/>
    <property type="evidence" value="ECO:0007669"/>
    <property type="project" value="UniProtKB-UniRule"/>
</dbReference>
<dbReference type="GO" id="GO:0008270">
    <property type="term" value="F:zinc ion binding"/>
    <property type="evidence" value="ECO:0007669"/>
    <property type="project" value="UniProtKB-UniRule"/>
</dbReference>
<dbReference type="GO" id="GO:0006364">
    <property type="term" value="P:rRNA processing"/>
    <property type="evidence" value="ECO:0007669"/>
    <property type="project" value="UniProtKB-UniRule"/>
</dbReference>
<dbReference type="Gene3D" id="3.40.390.30">
    <property type="entry name" value="Metalloproteases ('zincins'), catalytic domain"/>
    <property type="match status" value="1"/>
</dbReference>
<dbReference type="HAMAP" id="MF_00009">
    <property type="entry name" value="Endoribonucl_YbeY"/>
    <property type="match status" value="1"/>
</dbReference>
<dbReference type="InterPro" id="IPR023091">
    <property type="entry name" value="MetalPrtase_cat_dom_sf_prd"/>
</dbReference>
<dbReference type="InterPro" id="IPR002036">
    <property type="entry name" value="YbeY"/>
</dbReference>
<dbReference type="InterPro" id="IPR020549">
    <property type="entry name" value="YbeY_CS"/>
</dbReference>
<dbReference type="NCBIfam" id="TIGR00043">
    <property type="entry name" value="rRNA maturation RNase YbeY"/>
    <property type="match status" value="1"/>
</dbReference>
<dbReference type="PANTHER" id="PTHR46986">
    <property type="entry name" value="ENDORIBONUCLEASE YBEY, CHLOROPLASTIC"/>
    <property type="match status" value="1"/>
</dbReference>
<dbReference type="PANTHER" id="PTHR46986:SF1">
    <property type="entry name" value="ENDORIBONUCLEASE YBEY, CHLOROPLASTIC"/>
    <property type="match status" value="1"/>
</dbReference>
<dbReference type="Pfam" id="PF02130">
    <property type="entry name" value="YbeY"/>
    <property type="match status" value="1"/>
</dbReference>
<dbReference type="SUPFAM" id="SSF55486">
    <property type="entry name" value="Metalloproteases ('zincins'), catalytic domain"/>
    <property type="match status" value="1"/>
</dbReference>
<dbReference type="PROSITE" id="PS01306">
    <property type="entry name" value="UPF0054"/>
    <property type="match status" value="1"/>
</dbReference>
<evidence type="ECO:0000255" key="1">
    <source>
        <dbReference type="HAMAP-Rule" id="MF_00009"/>
    </source>
</evidence>
<name>YBEY_COXBR</name>
<keyword id="KW-0963">Cytoplasm</keyword>
<keyword id="KW-0255">Endonuclease</keyword>
<keyword id="KW-0378">Hydrolase</keyword>
<keyword id="KW-0479">Metal-binding</keyword>
<keyword id="KW-0540">Nuclease</keyword>
<keyword id="KW-0690">Ribosome biogenesis</keyword>
<keyword id="KW-0698">rRNA processing</keyword>
<keyword id="KW-0862">Zinc</keyword>